<protein>
    <recommendedName>
        <fullName>Chloramphenicol acetyltransferase</fullName>
        <shortName>CAT</shortName>
        <ecNumber>2.3.1.28</ecNumber>
    </recommendedName>
    <alternativeName>
        <fullName>Cat-86</fullName>
    </alternativeName>
</protein>
<organism>
    <name type="scientific">Bacillus pumilus</name>
    <name type="common">Bacillus mesentericus</name>
    <dbReference type="NCBI Taxonomy" id="1408"/>
    <lineage>
        <taxon>Bacteria</taxon>
        <taxon>Bacillati</taxon>
        <taxon>Bacillota</taxon>
        <taxon>Bacilli</taxon>
        <taxon>Bacillales</taxon>
        <taxon>Bacillaceae</taxon>
        <taxon>Bacillus</taxon>
    </lineage>
</organism>
<proteinExistence type="evidence at transcript level"/>
<keyword id="KW-0012">Acyltransferase</keyword>
<keyword id="KW-0046">Antibiotic resistance</keyword>
<keyword id="KW-0808">Transferase</keyword>
<name>CAT_BACPU</name>
<comment type="function">
    <text>This enzyme is an effector of chloramphenicol resistance in bacteria.</text>
</comment>
<comment type="catalytic activity">
    <reaction evidence="1">
        <text>chloramphenicol + acetyl-CoA = chloramphenicol 3-acetate + CoA</text>
        <dbReference type="Rhea" id="RHEA:18421"/>
        <dbReference type="ChEBI" id="CHEBI:16730"/>
        <dbReference type="ChEBI" id="CHEBI:17698"/>
        <dbReference type="ChEBI" id="CHEBI:57287"/>
        <dbReference type="ChEBI" id="CHEBI:57288"/>
        <dbReference type="EC" id="2.3.1.28"/>
    </reaction>
</comment>
<comment type="subunit">
    <text>Homotrimer.</text>
</comment>
<comment type="induction">
    <text>By subinhibitory concentrations of chloramphenicol.</text>
</comment>
<comment type="similarity">
    <text evidence="2">Belongs to the chloramphenicol acetyltransferase family.</text>
</comment>
<evidence type="ECO:0000255" key="1">
    <source>
        <dbReference type="PROSITE-ProRule" id="PRU10021"/>
    </source>
</evidence>
<evidence type="ECO:0000305" key="2"/>
<reference key="1">
    <citation type="journal article" date="1985" name="J. Bacteriol.">
        <title>Chloramphenicol-induced translation of cat-86 mRNA requires two cis-acting regulatory regions.</title>
        <authorList>
            <person name="Ambulos N.P. Jr."/>
            <person name="Mongkolsuk S."/>
            <person name="Kaufman J.D."/>
            <person name="Lovett P.S."/>
        </authorList>
    </citation>
    <scope>NUCLEOTIDE SEQUENCE [GENOMIC DNA]</scope>
</reference>
<reference key="2">
    <citation type="journal article" date="1983" name="Gene">
        <title>Nucleotide sequence of a Bacillus pumilus gene specifying chloramphenicol acetyltransferase.</title>
        <authorList>
            <person name="Harwood C.R."/>
            <person name="Williams D.M."/>
            <person name="Lovett P.S."/>
        </authorList>
    </citation>
    <scope>NUCLEOTIDE SEQUENCE [GENOMIC DNA]</scope>
    <source>
        <strain>NBRC 12089 / NCIMB 8600 / CDA 658</strain>
    </source>
</reference>
<accession>P00487</accession>
<dbReference type="EC" id="2.3.1.28"/>
<dbReference type="EMBL" id="K00544">
    <property type="protein sequence ID" value="AAA22289.1"/>
    <property type="molecule type" value="Genomic_DNA"/>
</dbReference>
<dbReference type="PIR" id="A00570">
    <property type="entry name" value="XXBSCP"/>
</dbReference>
<dbReference type="SMR" id="P00487"/>
<dbReference type="CARD" id="ARO:3002672">
    <property type="molecule name" value="Bpum_cat86"/>
    <property type="mechanism identifier" value="ARO:0001004"/>
    <property type="mechanism name" value="antibiotic inactivation"/>
</dbReference>
<dbReference type="KEGG" id="ag:AAA22289"/>
<dbReference type="PATRIC" id="fig|1408.90.peg.3135"/>
<dbReference type="GO" id="GO:0008811">
    <property type="term" value="F:chloramphenicol O-acetyltransferase activity"/>
    <property type="evidence" value="ECO:0007669"/>
    <property type="project" value="UniProtKB-EC"/>
</dbReference>
<dbReference type="GO" id="GO:0046677">
    <property type="term" value="P:response to antibiotic"/>
    <property type="evidence" value="ECO:0007669"/>
    <property type="project" value="UniProtKB-KW"/>
</dbReference>
<dbReference type="Gene3D" id="3.30.559.10">
    <property type="entry name" value="Chloramphenicol acetyltransferase-like domain"/>
    <property type="match status" value="1"/>
</dbReference>
<dbReference type="InterPro" id="IPR023213">
    <property type="entry name" value="CAT-like_dom_sf"/>
</dbReference>
<dbReference type="InterPro" id="IPR018372">
    <property type="entry name" value="Chloramphenicol_AcTrfase_AS"/>
</dbReference>
<dbReference type="InterPro" id="IPR001707">
    <property type="entry name" value="Cmp_AcTrfase"/>
</dbReference>
<dbReference type="NCBIfam" id="NF000491">
    <property type="entry name" value="chloram_CatA"/>
    <property type="match status" value="1"/>
</dbReference>
<dbReference type="PANTHER" id="PTHR38474:SF2">
    <property type="entry name" value="CHLORAMPHENICOL ACETYLTRANSFERASE"/>
    <property type="match status" value="1"/>
</dbReference>
<dbReference type="PANTHER" id="PTHR38474">
    <property type="entry name" value="SLR0299 PROTEIN"/>
    <property type="match status" value="1"/>
</dbReference>
<dbReference type="Pfam" id="PF00302">
    <property type="entry name" value="CAT"/>
    <property type="match status" value="1"/>
</dbReference>
<dbReference type="PIRSF" id="PIRSF000440">
    <property type="entry name" value="CAT"/>
    <property type="match status" value="1"/>
</dbReference>
<dbReference type="SMART" id="SM01059">
    <property type="entry name" value="CAT"/>
    <property type="match status" value="1"/>
</dbReference>
<dbReference type="SUPFAM" id="SSF52777">
    <property type="entry name" value="CoA-dependent acyltransferases"/>
    <property type="match status" value="1"/>
</dbReference>
<dbReference type="PROSITE" id="PS00100">
    <property type="entry name" value="CAT"/>
    <property type="match status" value="1"/>
</dbReference>
<gene>
    <name type="primary">cat86</name>
</gene>
<sequence>MFKQIDENYLRKEHFHHYMTLTRCSYSLVINLDITKLHAILKEKKLKVYPVQIYLLARAVQKIPEFRMDQVNDELGYWEILHPSYTILNKETKTFSSIWTPFDENFAQFYKSCVADIETFSKSSNLFPKPHMPENMFNISSLPWIDFTSFNLNVSTDEAYLLPIFTIGKFKVEEGKIILPVAIQVHHAVCDGYHAGQYVEYLRWLIEHCDEWLNDSLHIT</sequence>
<feature type="chain" id="PRO_0000165857" description="Chloramphenicol acetyltransferase">
    <location>
        <begin position="1"/>
        <end position="220"/>
    </location>
</feature>
<feature type="active site" description="Proton acceptor" evidence="1">
    <location>
        <position position="187"/>
    </location>
</feature>